<accession>P27331</accession>
<comment type="function">
    <text evidence="1">Plays a role in viral cell-to-cell propagation, by facilitating genome transport to neighboring plant cells through plasmosdesmata,.</text>
</comment>
<comment type="subcellular location">
    <subcellularLocation>
        <location evidence="1">Host endoplasmic reticulum membrane</location>
    </subcellularLocation>
</comment>
<comment type="miscellaneous">
    <text>TGBp1, TGBp2 and TGBp3 seem to act together for cell-to-cell propagation. TGBp1 is the main movement protein that physically cross the plasmodesma with the viral genome. TGBp2 and TGBp3 would facilitate TGBp1 function.</text>
</comment>
<comment type="similarity">
    <text evidence="3">Belongs to the Tymovirales TGBp2 protein family.</text>
</comment>
<keyword id="KW-1038">Host endoplasmic reticulum</keyword>
<keyword id="KW-1043">Host membrane</keyword>
<keyword id="KW-0472">Membrane</keyword>
<keyword id="KW-0812">Transmembrane</keyword>
<keyword id="KW-1133">Transmembrane helix</keyword>
<keyword id="KW-0813">Transport</keyword>
<keyword id="KW-0916">Viral movement protein</keyword>
<feature type="chain" id="PRO_0000222584" description="Movement protein TGB2">
    <location>
        <begin position="1"/>
        <end position="108"/>
    </location>
</feature>
<feature type="topological domain" description="Cytoplasmic" evidence="1">
    <location>
        <begin position="1"/>
        <end position="8"/>
    </location>
</feature>
<feature type="transmembrane region" description="Helical" evidence="2">
    <location>
        <begin position="9"/>
        <end position="29"/>
    </location>
</feature>
<feature type="topological domain" description="Lumenal" evidence="1">
    <location>
        <begin position="30"/>
        <end position="71"/>
    </location>
</feature>
<feature type="transmembrane region" description="Helical" evidence="2">
    <location>
        <begin position="72"/>
        <end position="92"/>
    </location>
</feature>
<feature type="topological domain" description="Cytoplasmic" evidence="1">
    <location>
        <begin position="93"/>
        <end position="108"/>
    </location>
</feature>
<name>TGB2_LVX</name>
<dbReference type="EMBL" id="X15342">
    <property type="protein sequence ID" value="CAA33395.1"/>
    <property type="molecule type" value="Genomic_RNA"/>
</dbReference>
<dbReference type="RefSeq" id="YP_263305.1">
    <property type="nucleotide sequence ID" value="NC_007192.1"/>
</dbReference>
<dbReference type="KEGG" id="vg:5140997"/>
<dbReference type="OrthoDB" id="20634at10239"/>
<dbReference type="GO" id="GO:0044167">
    <property type="term" value="C:host cell endoplasmic reticulum membrane"/>
    <property type="evidence" value="ECO:0007669"/>
    <property type="project" value="UniProtKB-SubCell"/>
</dbReference>
<dbReference type="GO" id="GO:0016020">
    <property type="term" value="C:membrane"/>
    <property type="evidence" value="ECO:0007669"/>
    <property type="project" value="UniProtKB-KW"/>
</dbReference>
<dbReference type="GO" id="GO:0046740">
    <property type="term" value="P:transport of virus in host, cell to cell"/>
    <property type="evidence" value="ECO:0007669"/>
    <property type="project" value="UniProtKB-KW"/>
</dbReference>
<dbReference type="InterPro" id="IPR001896">
    <property type="entry name" value="Plant_vir_prot"/>
</dbReference>
<dbReference type="Pfam" id="PF01307">
    <property type="entry name" value="Plant_vir_prot"/>
    <property type="match status" value="1"/>
</dbReference>
<organism>
    <name type="scientific">Lily virus X</name>
    <dbReference type="NCBI Taxonomy" id="12194"/>
    <lineage>
        <taxon>Viruses</taxon>
        <taxon>Riboviria</taxon>
        <taxon>Orthornavirae</taxon>
        <taxon>Kitrinoviricota</taxon>
        <taxon>Alsuviricetes</taxon>
        <taxon>Tymovirales</taxon>
        <taxon>Alphaflexiviridae</taxon>
        <taxon>Potexvirus</taxon>
    </lineage>
</organism>
<proteinExistence type="inferred from homology"/>
<organismHost>
    <name type="scientific">Lilium formosanum</name>
    <dbReference type="NCBI Taxonomy" id="63788"/>
</organismHost>
<reference key="1">
    <citation type="journal article" date="1990" name="J. Gen. Virol.">
        <title>Homologies between the genomes of a carlavirus (lily symptomless virus) and a potexvirus (lily virus X) from lily plants.</title>
        <authorList>
            <person name="Memelink J."/>
            <person name="van der Vlugt C.I.M."/>
            <person name="Linthorst H.J.M."/>
            <person name="Derks A.F.L.M."/>
            <person name="Asjes C.J."/>
            <person name="Bol J.F."/>
        </authorList>
    </citation>
    <scope>NUCLEOTIDE SEQUENCE [GENOMIC RNA]</scope>
</reference>
<reference key="2">
    <citation type="journal article" date="2005" name="Mol. Plant Microbe Interact.">
        <title>A new cell-to-cell transport model for Potexviruses.</title>
        <authorList>
            <person name="Verchot-Lubicz J."/>
        </authorList>
    </citation>
    <scope>REVIEW</scope>
</reference>
<gene>
    <name type="ORF">ORF3</name>
</gene>
<sequence>MPLTPPPDYTKPFIAVVVGGTLAAFVLLLTRNTLPHTGDNLHSLPHGGTYCDGTKRIRYGGPHRSHVPELPAKSWALITVVAILIALHFSCLRTHRVHRCVLCHTTSG</sequence>
<protein>
    <recommendedName>
        <fullName>Movement protein TGB2</fullName>
    </recommendedName>
    <alternativeName>
        <fullName>12 kDa protein</fullName>
    </alternativeName>
    <alternativeName>
        <fullName>Triple gene block 2 protein</fullName>
        <shortName>TGBp2</shortName>
    </alternativeName>
</protein>
<evidence type="ECO:0000250" key="1"/>
<evidence type="ECO:0000255" key="2"/>
<evidence type="ECO:0000305" key="3"/>